<name>CYF_LOLPR</name>
<proteinExistence type="inferred from homology"/>
<evidence type="ECO:0000250" key="1"/>
<evidence type="ECO:0000255" key="2">
    <source>
        <dbReference type="HAMAP-Rule" id="MF_00610"/>
    </source>
</evidence>
<gene>
    <name evidence="2" type="primary">petA</name>
    <name type="ordered locus">LopeCp052</name>
</gene>
<organism>
    <name type="scientific">Lolium perenne</name>
    <name type="common">Perennial ryegrass</name>
    <dbReference type="NCBI Taxonomy" id="4522"/>
    <lineage>
        <taxon>Eukaryota</taxon>
        <taxon>Viridiplantae</taxon>
        <taxon>Streptophyta</taxon>
        <taxon>Embryophyta</taxon>
        <taxon>Tracheophyta</taxon>
        <taxon>Spermatophyta</taxon>
        <taxon>Magnoliopsida</taxon>
        <taxon>Liliopsida</taxon>
        <taxon>Poales</taxon>
        <taxon>Poaceae</taxon>
        <taxon>BOP clade</taxon>
        <taxon>Pooideae</taxon>
        <taxon>Poodae</taxon>
        <taxon>Poeae</taxon>
        <taxon>Poeae Chloroplast Group 2 (Poeae type)</taxon>
        <taxon>Loliodinae</taxon>
        <taxon>Loliinae</taxon>
        <taxon>Lolium</taxon>
    </lineage>
</organism>
<geneLocation type="chloroplast"/>
<keyword id="KW-0150">Chloroplast</keyword>
<keyword id="KW-0249">Electron transport</keyword>
<keyword id="KW-0349">Heme</keyword>
<keyword id="KW-0408">Iron</keyword>
<keyword id="KW-0472">Membrane</keyword>
<keyword id="KW-0479">Metal-binding</keyword>
<keyword id="KW-0602">Photosynthesis</keyword>
<keyword id="KW-0934">Plastid</keyword>
<keyword id="KW-0732">Signal</keyword>
<keyword id="KW-0793">Thylakoid</keyword>
<keyword id="KW-0812">Transmembrane</keyword>
<keyword id="KW-1133">Transmembrane helix</keyword>
<keyword id="KW-0813">Transport</keyword>
<dbReference type="EMBL" id="AM777385">
    <property type="protein sequence ID" value="CAO85988.1"/>
    <property type="molecule type" value="Genomic_DNA"/>
</dbReference>
<dbReference type="RefSeq" id="YP_001531295.1">
    <property type="nucleotide sequence ID" value="NC_009950.1"/>
</dbReference>
<dbReference type="SMR" id="A8Y999"/>
<dbReference type="GeneID" id="5696575"/>
<dbReference type="KEGG" id="lper:5696575"/>
<dbReference type="GO" id="GO:0009535">
    <property type="term" value="C:chloroplast thylakoid membrane"/>
    <property type="evidence" value="ECO:0007669"/>
    <property type="project" value="UniProtKB-SubCell"/>
</dbReference>
<dbReference type="GO" id="GO:0009055">
    <property type="term" value="F:electron transfer activity"/>
    <property type="evidence" value="ECO:0007669"/>
    <property type="project" value="UniProtKB-UniRule"/>
</dbReference>
<dbReference type="GO" id="GO:0020037">
    <property type="term" value="F:heme binding"/>
    <property type="evidence" value="ECO:0007669"/>
    <property type="project" value="InterPro"/>
</dbReference>
<dbReference type="GO" id="GO:0005506">
    <property type="term" value="F:iron ion binding"/>
    <property type="evidence" value="ECO:0007669"/>
    <property type="project" value="InterPro"/>
</dbReference>
<dbReference type="GO" id="GO:0015979">
    <property type="term" value="P:photosynthesis"/>
    <property type="evidence" value="ECO:0007669"/>
    <property type="project" value="UniProtKB-UniRule"/>
</dbReference>
<dbReference type="FunFam" id="1.20.5.700:FF:000001">
    <property type="entry name" value="Cytochrome f"/>
    <property type="match status" value="1"/>
</dbReference>
<dbReference type="FunFam" id="2.40.50.100:FF:000007">
    <property type="entry name" value="Cytochrome f"/>
    <property type="match status" value="1"/>
</dbReference>
<dbReference type="FunFam" id="2.60.40.830:FF:000001">
    <property type="entry name" value="Cytochrome f"/>
    <property type="match status" value="1"/>
</dbReference>
<dbReference type="Gene3D" id="2.40.50.100">
    <property type="match status" value="1"/>
</dbReference>
<dbReference type="Gene3D" id="2.60.40.830">
    <property type="entry name" value="Cytochrome f large domain"/>
    <property type="match status" value="1"/>
</dbReference>
<dbReference type="Gene3D" id="1.20.5.700">
    <property type="entry name" value="Single helix bin"/>
    <property type="match status" value="1"/>
</dbReference>
<dbReference type="HAMAP" id="MF_00610">
    <property type="entry name" value="Cytb6_f_cytF"/>
    <property type="match status" value="1"/>
</dbReference>
<dbReference type="InterPro" id="IPR024058">
    <property type="entry name" value="Cyt-f_TM"/>
</dbReference>
<dbReference type="InterPro" id="IPR002325">
    <property type="entry name" value="Cyt_f"/>
</dbReference>
<dbReference type="InterPro" id="IPR024094">
    <property type="entry name" value="Cyt_f_lg_dom"/>
</dbReference>
<dbReference type="InterPro" id="IPR036826">
    <property type="entry name" value="Cyt_f_lg_dom_sf"/>
</dbReference>
<dbReference type="InterPro" id="IPR011054">
    <property type="entry name" value="Rudment_hybrid_motif"/>
</dbReference>
<dbReference type="PANTHER" id="PTHR33288">
    <property type="match status" value="1"/>
</dbReference>
<dbReference type="PANTHER" id="PTHR33288:SF10">
    <property type="entry name" value="CYTOCHROME F"/>
    <property type="match status" value="1"/>
</dbReference>
<dbReference type="Pfam" id="PF01333">
    <property type="entry name" value="Apocytochr_F_C"/>
    <property type="match status" value="1"/>
</dbReference>
<dbReference type="Pfam" id="PF16639">
    <property type="entry name" value="Apocytochr_F_N"/>
    <property type="match status" value="1"/>
</dbReference>
<dbReference type="PRINTS" id="PR00610">
    <property type="entry name" value="CYTOCHROMEF"/>
</dbReference>
<dbReference type="SUPFAM" id="SSF103431">
    <property type="entry name" value="Cytochrome f subunit of the cytochrome b6f complex, transmembrane anchor"/>
    <property type="match status" value="1"/>
</dbReference>
<dbReference type="SUPFAM" id="SSF49441">
    <property type="entry name" value="Cytochrome f, large domain"/>
    <property type="match status" value="1"/>
</dbReference>
<dbReference type="SUPFAM" id="SSF51246">
    <property type="entry name" value="Rudiment single hybrid motif"/>
    <property type="match status" value="1"/>
</dbReference>
<dbReference type="PROSITE" id="PS51010">
    <property type="entry name" value="CYTF"/>
    <property type="match status" value="1"/>
</dbReference>
<comment type="function">
    <text evidence="2">Component of the cytochrome b6-f complex, which mediates electron transfer between photosystem II (PSII) and photosystem I (PSI), cyclic electron flow around PSI, and state transitions.</text>
</comment>
<comment type="cofactor">
    <cofactor evidence="2">
        <name>heme</name>
        <dbReference type="ChEBI" id="CHEBI:30413"/>
    </cofactor>
    <text evidence="2">Binds 1 heme group covalently.</text>
</comment>
<comment type="subunit">
    <text evidence="1">The 4 large subunits of the cytochrome b6-f complex are cytochrome b6, subunit IV (17 kDa polypeptide, petD), cytochrome f and the Rieske protein, while the 4 small subunits are PetG, PetL, PetM and PetN. The complex functions as a dimer (By similarity).</text>
</comment>
<comment type="subcellular location">
    <subcellularLocation>
        <location evidence="2">Plastid</location>
        <location evidence="2">Chloroplast thylakoid membrane</location>
        <topology evidence="2">Single-pass membrane protein</topology>
    </subcellularLocation>
</comment>
<comment type="similarity">
    <text evidence="2">Belongs to the cytochrome f family.</text>
</comment>
<accession>A8Y999</accession>
<sequence length="320" mass="35327">MENKNTFSWVKEQMTRSISVSIMIYVITQTSISNAYPIFAQQGYENPREATGRIVCANCHLASKPVDIEVPQAVLPDTVFEAVLRIPYDMQLKQVLANGKKGGLNVGAVLILPEGFELAPPDRISPELKEKIGNLSFQSYRPDKKNILVIGPVPGKKYSEIVFPILSPDPATKKDAYFLKYPIYVGGNRGRGQIYPDGSKSNNTVYNATSTGIVKKILRKEKGGYEISIVDASDGRQVIDTIPPGPELLVSEGESIKLDQPLTSNPNVGGFGQGDAEIVLQDPLRVQGLLFFFASVILAQVFLVLKKKQFEKVQLYEMNF</sequence>
<feature type="signal peptide" evidence="2">
    <location>
        <begin position="1"/>
        <end position="35"/>
    </location>
</feature>
<feature type="chain" id="PRO_0000342071" description="Cytochrome f">
    <location>
        <begin position="36"/>
        <end position="320"/>
    </location>
</feature>
<feature type="transmembrane region" description="Helical" evidence="2">
    <location>
        <begin position="286"/>
        <end position="306"/>
    </location>
</feature>
<feature type="binding site" description="axial binding residue" evidence="2">
    <location>
        <position position="36"/>
    </location>
    <ligand>
        <name>heme</name>
        <dbReference type="ChEBI" id="CHEBI:30413"/>
    </ligand>
    <ligandPart>
        <name>Fe</name>
        <dbReference type="ChEBI" id="CHEBI:18248"/>
    </ligandPart>
</feature>
<feature type="binding site" description="covalent" evidence="2">
    <location>
        <position position="56"/>
    </location>
    <ligand>
        <name>heme</name>
        <dbReference type="ChEBI" id="CHEBI:30413"/>
    </ligand>
</feature>
<feature type="binding site" description="covalent" evidence="2">
    <location>
        <position position="59"/>
    </location>
    <ligand>
        <name>heme</name>
        <dbReference type="ChEBI" id="CHEBI:30413"/>
    </ligand>
</feature>
<feature type="binding site" description="axial binding residue" evidence="2">
    <location>
        <position position="60"/>
    </location>
    <ligand>
        <name>heme</name>
        <dbReference type="ChEBI" id="CHEBI:30413"/>
    </ligand>
    <ligandPart>
        <name>Fe</name>
        <dbReference type="ChEBI" id="CHEBI:18248"/>
    </ligandPart>
</feature>
<reference key="1">
    <citation type="journal article" date="2008" name="PLoS ONE">
        <title>An optimized chloroplast DNA extraction protocol for grasses (Poaceae) proves suitable for whole plastid genome sequencing and SNP detection.</title>
        <authorList>
            <person name="Diekmann K."/>
            <person name="Hodkinson T.R."/>
            <person name="Fricke E."/>
            <person name="Barth S."/>
        </authorList>
    </citation>
    <scope>NUCLEOTIDE SEQUENCE [LARGE SCALE GENOMIC DNA]</scope>
    <source>
        <strain>cv. Cashel</strain>
    </source>
</reference>
<protein>
    <recommendedName>
        <fullName evidence="2">Cytochrome f</fullName>
    </recommendedName>
</protein>